<comment type="function">
    <text evidence="1">Catalyzes the rearrangement of 1-deoxy-D-xylulose 5-phosphate (DXP) to produce the thiazole phosphate moiety of thiamine. Sulfur is provided by the thiocarboxylate moiety of the carrier protein ThiS. In vitro, sulfur can be provided by H(2)S.</text>
</comment>
<comment type="catalytic activity">
    <reaction evidence="1">
        <text>[ThiS sulfur-carrier protein]-C-terminal-Gly-aminoethanethioate + 2-iminoacetate + 1-deoxy-D-xylulose 5-phosphate = [ThiS sulfur-carrier protein]-C-terminal Gly-Gly + 2-[(2R,5Z)-2-carboxy-4-methylthiazol-5(2H)-ylidene]ethyl phosphate + 2 H2O + H(+)</text>
        <dbReference type="Rhea" id="RHEA:26297"/>
        <dbReference type="Rhea" id="RHEA-COMP:12909"/>
        <dbReference type="Rhea" id="RHEA-COMP:19908"/>
        <dbReference type="ChEBI" id="CHEBI:15377"/>
        <dbReference type="ChEBI" id="CHEBI:15378"/>
        <dbReference type="ChEBI" id="CHEBI:57792"/>
        <dbReference type="ChEBI" id="CHEBI:62899"/>
        <dbReference type="ChEBI" id="CHEBI:77846"/>
        <dbReference type="ChEBI" id="CHEBI:90778"/>
        <dbReference type="ChEBI" id="CHEBI:232372"/>
        <dbReference type="EC" id="2.8.1.10"/>
    </reaction>
</comment>
<comment type="pathway">
    <text evidence="1">Cofactor biosynthesis; thiamine diphosphate biosynthesis.</text>
</comment>
<comment type="subunit">
    <text evidence="1">Homotetramer. Forms heterodimers with either ThiH or ThiS.</text>
</comment>
<comment type="subcellular location">
    <subcellularLocation>
        <location evidence="1">Cytoplasm</location>
    </subcellularLocation>
</comment>
<comment type="similarity">
    <text evidence="1">Belongs to the ThiG family.</text>
</comment>
<keyword id="KW-0963">Cytoplasm</keyword>
<keyword id="KW-1185">Reference proteome</keyword>
<keyword id="KW-0704">Schiff base</keyword>
<keyword id="KW-0784">Thiamine biosynthesis</keyword>
<keyword id="KW-0808">Transferase</keyword>
<dbReference type="EC" id="2.8.1.10" evidence="1"/>
<dbReference type="EMBL" id="CP000576">
    <property type="protein sequence ID" value="ABO18477.1"/>
    <property type="molecule type" value="Genomic_DNA"/>
</dbReference>
<dbReference type="RefSeq" id="WP_011863759.1">
    <property type="nucleotide sequence ID" value="NC_009091.1"/>
</dbReference>
<dbReference type="SMR" id="A3PFF2"/>
<dbReference type="STRING" id="167546.P9301_18541"/>
<dbReference type="KEGG" id="pmg:P9301_18541"/>
<dbReference type="eggNOG" id="COG2022">
    <property type="taxonomic scope" value="Bacteria"/>
</dbReference>
<dbReference type="HOGENOM" id="CLU_062233_1_0_3"/>
<dbReference type="OrthoDB" id="9805935at2"/>
<dbReference type="UniPathway" id="UPA00060"/>
<dbReference type="Proteomes" id="UP000001430">
    <property type="component" value="Chromosome"/>
</dbReference>
<dbReference type="GO" id="GO:0005737">
    <property type="term" value="C:cytoplasm"/>
    <property type="evidence" value="ECO:0007669"/>
    <property type="project" value="UniProtKB-SubCell"/>
</dbReference>
<dbReference type="GO" id="GO:1990107">
    <property type="term" value="F:thiazole synthase activity"/>
    <property type="evidence" value="ECO:0007669"/>
    <property type="project" value="UniProtKB-EC"/>
</dbReference>
<dbReference type="GO" id="GO:0009229">
    <property type="term" value="P:thiamine diphosphate biosynthetic process"/>
    <property type="evidence" value="ECO:0007669"/>
    <property type="project" value="UniProtKB-UniRule"/>
</dbReference>
<dbReference type="CDD" id="cd04728">
    <property type="entry name" value="ThiG"/>
    <property type="match status" value="1"/>
</dbReference>
<dbReference type="Gene3D" id="3.20.20.70">
    <property type="entry name" value="Aldolase class I"/>
    <property type="match status" value="1"/>
</dbReference>
<dbReference type="HAMAP" id="MF_00443">
    <property type="entry name" value="ThiG"/>
    <property type="match status" value="1"/>
</dbReference>
<dbReference type="InterPro" id="IPR013785">
    <property type="entry name" value="Aldolase_TIM"/>
</dbReference>
<dbReference type="InterPro" id="IPR033983">
    <property type="entry name" value="Thiazole_synthase_ThiG"/>
</dbReference>
<dbReference type="InterPro" id="IPR008867">
    <property type="entry name" value="ThiG"/>
</dbReference>
<dbReference type="PANTHER" id="PTHR34266">
    <property type="entry name" value="THIAZOLE SYNTHASE"/>
    <property type="match status" value="1"/>
</dbReference>
<dbReference type="PANTHER" id="PTHR34266:SF2">
    <property type="entry name" value="THIAZOLE SYNTHASE"/>
    <property type="match status" value="1"/>
</dbReference>
<dbReference type="Pfam" id="PF05690">
    <property type="entry name" value="ThiG"/>
    <property type="match status" value="1"/>
</dbReference>
<dbReference type="SUPFAM" id="SSF110399">
    <property type="entry name" value="ThiG-like"/>
    <property type="match status" value="1"/>
</dbReference>
<protein>
    <recommendedName>
        <fullName evidence="1">Thiazole synthase</fullName>
        <ecNumber evidence="1">2.8.1.10</ecNumber>
    </recommendedName>
</protein>
<organism>
    <name type="scientific">Prochlorococcus marinus (strain MIT 9301)</name>
    <dbReference type="NCBI Taxonomy" id="167546"/>
    <lineage>
        <taxon>Bacteria</taxon>
        <taxon>Bacillati</taxon>
        <taxon>Cyanobacteriota</taxon>
        <taxon>Cyanophyceae</taxon>
        <taxon>Synechococcales</taxon>
        <taxon>Prochlorococcaceae</taxon>
        <taxon>Prochlorococcus</taxon>
    </lineage>
</organism>
<reference key="1">
    <citation type="journal article" date="2007" name="PLoS Genet.">
        <title>Patterns and implications of gene gain and loss in the evolution of Prochlorococcus.</title>
        <authorList>
            <person name="Kettler G.C."/>
            <person name="Martiny A.C."/>
            <person name="Huang K."/>
            <person name="Zucker J."/>
            <person name="Coleman M.L."/>
            <person name="Rodrigue S."/>
            <person name="Chen F."/>
            <person name="Lapidus A."/>
            <person name="Ferriera S."/>
            <person name="Johnson J."/>
            <person name="Steglich C."/>
            <person name="Church G.M."/>
            <person name="Richardson P."/>
            <person name="Chisholm S.W."/>
        </authorList>
    </citation>
    <scope>NUCLEOTIDE SEQUENCE [LARGE SCALE GENOMIC DNA]</scope>
    <source>
        <strain>MIT 9301</strain>
    </source>
</reference>
<feature type="chain" id="PRO_1000026022" description="Thiazole synthase">
    <location>
        <begin position="1"/>
        <end position="264"/>
    </location>
</feature>
<feature type="active site" description="Schiff-base intermediate with DXP" evidence="1">
    <location>
        <position position="106"/>
    </location>
</feature>
<feature type="binding site" evidence="1">
    <location>
        <position position="167"/>
    </location>
    <ligand>
        <name>1-deoxy-D-xylulose 5-phosphate</name>
        <dbReference type="ChEBI" id="CHEBI:57792"/>
    </ligand>
</feature>
<feature type="binding site" evidence="1">
    <location>
        <begin position="193"/>
        <end position="194"/>
    </location>
    <ligand>
        <name>1-deoxy-D-xylulose 5-phosphate</name>
        <dbReference type="ChEBI" id="CHEBI:57792"/>
    </ligand>
</feature>
<feature type="binding site" evidence="1">
    <location>
        <begin position="215"/>
        <end position="216"/>
    </location>
    <ligand>
        <name>1-deoxy-D-xylulose 5-phosphate</name>
        <dbReference type="ChEBI" id="CHEBI:57792"/>
    </ligand>
</feature>
<name>THIG_PROM0</name>
<evidence type="ECO:0000255" key="1">
    <source>
        <dbReference type="HAMAP-Rule" id="MF_00443"/>
    </source>
</evidence>
<sequence length="264" mass="28465">MKNYSSLIIGGKKFSSRLMVGTGKYKSSQDMVESLSNSETEIITVAVRRIKNEQSGENLLEKINWEKYWMLPNTAGCVNSDEAVRIAILGRELAKLSGQEENNFVKLEVIPDKKYLLPDPIETLKAAEILIKKGFAVLPYINADPILAKRLEEIGCATVMPLGSPIGSGQGLLNLSNIRIIIENAKVPVIIDAGIGVPSEASQAMEIGADGVLINSAIAQAANPPLMAQAINYSVKAGRQAFLAGRIKKQDFAVASSPEKNISI</sequence>
<gene>
    <name evidence="1" type="primary">thiG</name>
    <name type="ordered locus">P9301_18541</name>
</gene>
<accession>A3PFF2</accession>
<proteinExistence type="inferred from homology"/>